<keyword id="KW-0378">Hydrolase</keyword>
<keyword id="KW-0479">Metal-binding</keyword>
<keyword id="KW-1185">Reference proteome</keyword>
<keyword id="KW-0862">Zinc</keyword>
<name>MTAD_NATPD</name>
<accession>Q3ITF7</accession>
<gene>
    <name evidence="1" type="primary">mtaD</name>
    <name type="ordered locus">NP_0972A</name>
</gene>
<comment type="function">
    <text evidence="1">Catalyzes the deamination of 5-methylthioadenosine and S-adenosyl-L-homocysteine into 5-methylthioinosine and S-inosyl-L-homocysteine, respectively. Is also able to deaminate adenosine.</text>
</comment>
<comment type="catalytic activity">
    <reaction evidence="1">
        <text>S-adenosyl-L-homocysteine + H2O + H(+) = S-inosyl-L-homocysteine + NH4(+)</text>
        <dbReference type="Rhea" id="RHEA:20716"/>
        <dbReference type="ChEBI" id="CHEBI:15377"/>
        <dbReference type="ChEBI" id="CHEBI:15378"/>
        <dbReference type="ChEBI" id="CHEBI:28938"/>
        <dbReference type="ChEBI" id="CHEBI:57856"/>
        <dbReference type="ChEBI" id="CHEBI:57985"/>
        <dbReference type="EC" id="3.5.4.28"/>
    </reaction>
</comment>
<comment type="catalytic activity">
    <reaction evidence="1">
        <text>S-methyl-5'-thioadenosine + H2O + H(+) = S-methyl-5'-thioinosine + NH4(+)</text>
        <dbReference type="Rhea" id="RHEA:25025"/>
        <dbReference type="ChEBI" id="CHEBI:15377"/>
        <dbReference type="ChEBI" id="CHEBI:15378"/>
        <dbReference type="ChEBI" id="CHEBI:17509"/>
        <dbReference type="ChEBI" id="CHEBI:28938"/>
        <dbReference type="ChEBI" id="CHEBI:48595"/>
        <dbReference type="EC" id="3.5.4.31"/>
    </reaction>
</comment>
<comment type="cofactor">
    <cofactor evidence="1">
        <name>Zn(2+)</name>
        <dbReference type="ChEBI" id="CHEBI:29105"/>
    </cofactor>
    <text evidence="1">Binds 1 zinc ion per subunit.</text>
</comment>
<comment type="similarity">
    <text evidence="1">Belongs to the metallo-dependent hydrolases superfamily. MTA/SAH deaminase family.</text>
</comment>
<dbReference type="EC" id="3.5.4.28" evidence="1"/>
<dbReference type="EC" id="3.5.4.31" evidence="1"/>
<dbReference type="EMBL" id="CR936257">
    <property type="protein sequence ID" value="CAI48577.1"/>
    <property type="molecule type" value="Genomic_DNA"/>
</dbReference>
<dbReference type="RefSeq" id="WP_011322212.1">
    <property type="nucleotide sequence ID" value="NC_007426.1"/>
</dbReference>
<dbReference type="SMR" id="Q3ITF7"/>
<dbReference type="STRING" id="348780.NP_0972A"/>
<dbReference type="EnsemblBacteria" id="CAI48577">
    <property type="protein sequence ID" value="CAI48577"/>
    <property type="gene ID" value="NP_0972A"/>
</dbReference>
<dbReference type="GeneID" id="3702786"/>
<dbReference type="KEGG" id="nph:NP_0972A"/>
<dbReference type="eggNOG" id="arCOG00695">
    <property type="taxonomic scope" value="Archaea"/>
</dbReference>
<dbReference type="HOGENOM" id="CLU_012358_2_1_2"/>
<dbReference type="OrthoDB" id="372084at2157"/>
<dbReference type="Proteomes" id="UP000002698">
    <property type="component" value="Chromosome"/>
</dbReference>
<dbReference type="GO" id="GO:0090614">
    <property type="term" value="F:5'-methylthioadenosine deaminase activity"/>
    <property type="evidence" value="ECO:0007669"/>
    <property type="project" value="UniProtKB-UniRule"/>
</dbReference>
<dbReference type="GO" id="GO:0046872">
    <property type="term" value="F:metal ion binding"/>
    <property type="evidence" value="ECO:0007669"/>
    <property type="project" value="UniProtKB-KW"/>
</dbReference>
<dbReference type="GO" id="GO:0050270">
    <property type="term" value="F:S-adenosylhomocysteine deaminase activity"/>
    <property type="evidence" value="ECO:0007669"/>
    <property type="project" value="UniProtKB-UniRule"/>
</dbReference>
<dbReference type="CDD" id="cd01298">
    <property type="entry name" value="ATZ_TRZ_like"/>
    <property type="match status" value="1"/>
</dbReference>
<dbReference type="FunFam" id="3.20.20.140:FF:000014">
    <property type="entry name" value="5-methylthioadenosine/S-adenosylhomocysteine deaminase"/>
    <property type="match status" value="1"/>
</dbReference>
<dbReference type="Gene3D" id="3.20.20.140">
    <property type="entry name" value="Metal-dependent hydrolases"/>
    <property type="match status" value="1"/>
</dbReference>
<dbReference type="Gene3D" id="2.30.40.10">
    <property type="entry name" value="Urease, subunit C, domain 1"/>
    <property type="match status" value="1"/>
</dbReference>
<dbReference type="HAMAP" id="MF_01281">
    <property type="entry name" value="MTA_SAH_deamin"/>
    <property type="match status" value="1"/>
</dbReference>
<dbReference type="InterPro" id="IPR006680">
    <property type="entry name" value="Amidohydro-rel"/>
</dbReference>
<dbReference type="InterPro" id="IPR023512">
    <property type="entry name" value="Deaminase_MtaD/DadD"/>
</dbReference>
<dbReference type="InterPro" id="IPR011059">
    <property type="entry name" value="Metal-dep_hydrolase_composite"/>
</dbReference>
<dbReference type="InterPro" id="IPR032466">
    <property type="entry name" value="Metal_Hydrolase"/>
</dbReference>
<dbReference type="InterPro" id="IPR050287">
    <property type="entry name" value="MTA/SAH_deaminase"/>
</dbReference>
<dbReference type="PANTHER" id="PTHR43794:SF11">
    <property type="entry name" value="AMIDOHYDROLASE-RELATED DOMAIN-CONTAINING PROTEIN"/>
    <property type="match status" value="1"/>
</dbReference>
<dbReference type="PANTHER" id="PTHR43794">
    <property type="entry name" value="AMINOHYDROLASE SSNA-RELATED"/>
    <property type="match status" value="1"/>
</dbReference>
<dbReference type="Pfam" id="PF01979">
    <property type="entry name" value="Amidohydro_1"/>
    <property type="match status" value="1"/>
</dbReference>
<dbReference type="SUPFAM" id="SSF51338">
    <property type="entry name" value="Composite domain of metallo-dependent hydrolases"/>
    <property type="match status" value="2"/>
</dbReference>
<dbReference type="SUPFAM" id="SSF51556">
    <property type="entry name" value="Metallo-dependent hydrolases"/>
    <property type="match status" value="1"/>
</dbReference>
<organism>
    <name type="scientific">Natronomonas pharaonis (strain ATCC 35678 / DSM 2160 / CIP 103997 / JCM 8858 / NBRC 14720 / NCIMB 2260 / Gabara)</name>
    <name type="common">Halobacterium pharaonis</name>
    <dbReference type="NCBI Taxonomy" id="348780"/>
    <lineage>
        <taxon>Archaea</taxon>
        <taxon>Methanobacteriati</taxon>
        <taxon>Methanobacteriota</taxon>
        <taxon>Stenosarchaea group</taxon>
        <taxon>Halobacteria</taxon>
        <taxon>Halobacteriales</taxon>
        <taxon>Haloarculaceae</taxon>
        <taxon>Natronomonas</taxon>
    </lineage>
</organism>
<proteinExistence type="inferred from homology"/>
<reference key="1">
    <citation type="journal article" date="2005" name="Genome Res.">
        <title>Living with two extremes: conclusions from the genome sequence of Natronomonas pharaonis.</title>
        <authorList>
            <person name="Falb M."/>
            <person name="Pfeiffer F."/>
            <person name="Palm P."/>
            <person name="Rodewald K."/>
            <person name="Hickmann V."/>
            <person name="Tittor J."/>
            <person name="Oesterhelt D."/>
        </authorList>
    </citation>
    <scope>NUCLEOTIDE SEQUENCE [LARGE SCALE GENOMIC DNA]</scope>
    <source>
        <strain>ATCC 35678 / DSM 2160 / CIP 103997 / JCM 8858 / NBRC 14720 / NCIMB 2260 / Gabara</strain>
    </source>
</reference>
<sequence>MSTLQITGGQVLTPELTVRTADVLADSETGEILAVGDTAAGDRTLDAEGCLVVPGLVNTHCHAAMTLLRGYADDKPLDRWLQEDIWPVEAELTPEDIRAGTRLGLVELLKNGVTAVGDMYFEVPEVAAAVEEAGIRARLGHGIVTVGKDEADARADFEEGLAVARELDGAADGRVRTALMPHSLTTADPDLIAEFVPRARDAGVPIHYHANETTDEVDPIVDERGVRPLEFADELGLLDEGDFIAHGVHVDETEIELLAERGVGVAHCPASNMKLASGIAPVQEFLDAGVTVGIGTDGPASNNDLDVVDEMRDAAMVGKLGADDAAAVAAPDIVNAATAGGAETLGFDAGRVEAGALADLAIVDLDAPHLTPSHDLVSHLAYAVRGSDVRHTVVGGEVIVEDREVRTLDAGAVKREAERHAAELVSRAEGD</sequence>
<evidence type="ECO:0000255" key="1">
    <source>
        <dbReference type="HAMAP-Rule" id="MF_01281"/>
    </source>
</evidence>
<feature type="chain" id="PRO_0000312484" description="5-methylthioadenosine/S-adenosylhomocysteine deaminase">
    <location>
        <begin position="1"/>
        <end position="431"/>
    </location>
</feature>
<feature type="binding site" evidence="1">
    <location>
        <position position="60"/>
    </location>
    <ligand>
        <name>Zn(2+)</name>
        <dbReference type="ChEBI" id="CHEBI:29105"/>
    </ligand>
</feature>
<feature type="binding site" evidence="1">
    <location>
        <position position="62"/>
    </location>
    <ligand>
        <name>Zn(2+)</name>
        <dbReference type="ChEBI" id="CHEBI:29105"/>
    </ligand>
</feature>
<feature type="binding site" evidence="1">
    <location>
        <position position="89"/>
    </location>
    <ligand>
        <name>substrate</name>
    </ligand>
</feature>
<feature type="binding site" evidence="1">
    <location>
        <position position="182"/>
    </location>
    <ligand>
        <name>substrate</name>
    </ligand>
</feature>
<feature type="binding site" evidence="1">
    <location>
        <position position="209"/>
    </location>
    <ligand>
        <name>Zn(2+)</name>
        <dbReference type="ChEBI" id="CHEBI:29105"/>
    </ligand>
</feature>
<feature type="binding site" evidence="1">
    <location>
        <position position="212"/>
    </location>
    <ligand>
        <name>substrate</name>
    </ligand>
</feature>
<feature type="binding site" evidence="1">
    <location>
        <position position="297"/>
    </location>
    <ligand>
        <name>substrate</name>
    </ligand>
</feature>
<feature type="binding site" evidence="1">
    <location>
        <position position="297"/>
    </location>
    <ligand>
        <name>Zn(2+)</name>
        <dbReference type="ChEBI" id="CHEBI:29105"/>
    </ligand>
</feature>
<protein>
    <recommendedName>
        <fullName evidence="1">5-methylthioadenosine/S-adenosylhomocysteine deaminase</fullName>
        <shortName evidence="1">MTA/SAH deaminase</shortName>
        <ecNumber evidence="1">3.5.4.28</ecNumber>
        <ecNumber evidence="1">3.5.4.31</ecNumber>
    </recommendedName>
</protein>